<geneLocation type="chloroplast"/>
<dbReference type="EC" id="7.1.2.2" evidence="1"/>
<dbReference type="EMBL" id="DQ864733">
    <property type="protein sequence ID" value="ABI49027.1"/>
    <property type="molecule type" value="Genomic_DNA"/>
</dbReference>
<dbReference type="RefSeq" id="YP_740482.1">
    <property type="nucleotide sequence ID" value="NC_008334.1"/>
</dbReference>
<dbReference type="SMR" id="Q09MH1"/>
<dbReference type="GeneID" id="4271212"/>
<dbReference type="KEGG" id="cit:4271212"/>
<dbReference type="OrthoDB" id="928021at71240"/>
<dbReference type="GO" id="GO:0009535">
    <property type="term" value="C:chloroplast thylakoid membrane"/>
    <property type="evidence" value="ECO:0007669"/>
    <property type="project" value="UniProtKB-SubCell"/>
</dbReference>
<dbReference type="GO" id="GO:0045259">
    <property type="term" value="C:proton-transporting ATP synthase complex"/>
    <property type="evidence" value="ECO:0007669"/>
    <property type="project" value="UniProtKB-KW"/>
</dbReference>
<dbReference type="GO" id="GO:0005524">
    <property type="term" value="F:ATP binding"/>
    <property type="evidence" value="ECO:0007669"/>
    <property type="project" value="UniProtKB-UniRule"/>
</dbReference>
<dbReference type="GO" id="GO:0016887">
    <property type="term" value="F:ATP hydrolysis activity"/>
    <property type="evidence" value="ECO:0007669"/>
    <property type="project" value="InterPro"/>
</dbReference>
<dbReference type="GO" id="GO:0046933">
    <property type="term" value="F:proton-transporting ATP synthase activity, rotational mechanism"/>
    <property type="evidence" value="ECO:0007669"/>
    <property type="project" value="UniProtKB-UniRule"/>
</dbReference>
<dbReference type="CDD" id="cd18110">
    <property type="entry name" value="ATP-synt_F1_beta_C"/>
    <property type="match status" value="1"/>
</dbReference>
<dbReference type="CDD" id="cd18115">
    <property type="entry name" value="ATP-synt_F1_beta_N"/>
    <property type="match status" value="1"/>
</dbReference>
<dbReference type="CDD" id="cd01133">
    <property type="entry name" value="F1-ATPase_beta_CD"/>
    <property type="match status" value="1"/>
</dbReference>
<dbReference type="FunFam" id="1.10.1140.10:FF:000001">
    <property type="entry name" value="ATP synthase subunit beta"/>
    <property type="match status" value="1"/>
</dbReference>
<dbReference type="FunFam" id="3.40.50.12240:FF:000006">
    <property type="entry name" value="ATP synthase subunit beta"/>
    <property type="match status" value="1"/>
</dbReference>
<dbReference type="FunFam" id="3.40.50.300:FF:000004">
    <property type="entry name" value="ATP synthase subunit beta"/>
    <property type="match status" value="1"/>
</dbReference>
<dbReference type="FunFam" id="2.40.10.170:FF:000002">
    <property type="entry name" value="ATP synthase subunit beta, chloroplastic"/>
    <property type="match status" value="1"/>
</dbReference>
<dbReference type="Gene3D" id="2.40.10.170">
    <property type="match status" value="1"/>
</dbReference>
<dbReference type="Gene3D" id="1.10.1140.10">
    <property type="entry name" value="Bovine Mitochondrial F1-atpase, Atp Synthase Beta Chain, Chain D, domain 3"/>
    <property type="match status" value="1"/>
</dbReference>
<dbReference type="Gene3D" id="3.40.50.300">
    <property type="entry name" value="P-loop containing nucleotide triphosphate hydrolases"/>
    <property type="match status" value="1"/>
</dbReference>
<dbReference type="HAMAP" id="MF_01347">
    <property type="entry name" value="ATP_synth_beta_bact"/>
    <property type="match status" value="1"/>
</dbReference>
<dbReference type="InterPro" id="IPR003593">
    <property type="entry name" value="AAA+_ATPase"/>
</dbReference>
<dbReference type="InterPro" id="IPR055190">
    <property type="entry name" value="ATP-synt_VA_C"/>
</dbReference>
<dbReference type="InterPro" id="IPR005722">
    <property type="entry name" value="ATP_synth_F1_bsu"/>
</dbReference>
<dbReference type="InterPro" id="IPR020003">
    <property type="entry name" value="ATPase_a/bsu_AS"/>
</dbReference>
<dbReference type="InterPro" id="IPR050053">
    <property type="entry name" value="ATPase_alpha/beta_chains"/>
</dbReference>
<dbReference type="InterPro" id="IPR004100">
    <property type="entry name" value="ATPase_F1/V1/A1_a/bsu_N"/>
</dbReference>
<dbReference type="InterPro" id="IPR036121">
    <property type="entry name" value="ATPase_F1/V1/A1_a/bsu_N_sf"/>
</dbReference>
<dbReference type="InterPro" id="IPR000194">
    <property type="entry name" value="ATPase_F1/V1/A1_a/bsu_nucl-bd"/>
</dbReference>
<dbReference type="InterPro" id="IPR024034">
    <property type="entry name" value="ATPase_F1/V1_b/a_C"/>
</dbReference>
<dbReference type="InterPro" id="IPR027417">
    <property type="entry name" value="P-loop_NTPase"/>
</dbReference>
<dbReference type="NCBIfam" id="TIGR01039">
    <property type="entry name" value="atpD"/>
    <property type="match status" value="1"/>
</dbReference>
<dbReference type="PANTHER" id="PTHR15184">
    <property type="entry name" value="ATP SYNTHASE"/>
    <property type="match status" value="1"/>
</dbReference>
<dbReference type="PANTHER" id="PTHR15184:SF71">
    <property type="entry name" value="ATP SYNTHASE SUBUNIT BETA, MITOCHONDRIAL"/>
    <property type="match status" value="1"/>
</dbReference>
<dbReference type="Pfam" id="PF00006">
    <property type="entry name" value="ATP-synt_ab"/>
    <property type="match status" value="1"/>
</dbReference>
<dbReference type="Pfam" id="PF02874">
    <property type="entry name" value="ATP-synt_ab_N"/>
    <property type="match status" value="1"/>
</dbReference>
<dbReference type="Pfam" id="PF22919">
    <property type="entry name" value="ATP-synt_VA_C"/>
    <property type="match status" value="1"/>
</dbReference>
<dbReference type="SMART" id="SM00382">
    <property type="entry name" value="AAA"/>
    <property type="match status" value="1"/>
</dbReference>
<dbReference type="SUPFAM" id="SSF47917">
    <property type="entry name" value="C-terminal domain of alpha and beta subunits of F1 ATP synthase"/>
    <property type="match status" value="1"/>
</dbReference>
<dbReference type="SUPFAM" id="SSF50615">
    <property type="entry name" value="N-terminal domain of alpha and beta subunits of F1 ATP synthase"/>
    <property type="match status" value="1"/>
</dbReference>
<dbReference type="SUPFAM" id="SSF52540">
    <property type="entry name" value="P-loop containing nucleoside triphosphate hydrolases"/>
    <property type="match status" value="1"/>
</dbReference>
<dbReference type="PROSITE" id="PS00152">
    <property type="entry name" value="ATPASE_ALPHA_BETA"/>
    <property type="match status" value="1"/>
</dbReference>
<keyword id="KW-0066">ATP synthesis</keyword>
<keyword id="KW-0067">ATP-binding</keyword>
<keyword id="KW-0139">CF(1)</keyword>
<keyword id="KW-0150">Chloroplast</keyword>
<keyword id="KW-0375">Hydrogen ion transport</keyword>
<keyword id="KW-0406">Ion transport</keyword>
<keyword id="KW-0472">Membrane</keyword>
<keyword id="KW-0547">Nucleotide-binding</keyword>
<keyword id="KW-0934">Plastid</keyword>
<keyword id="KW-0793">Thylakoid</keyword>
<keyword id="KW-1278">Translocase</keyword>
<keyword id="KW-0813">Transport</keyword>
<name>ATPB_CITSI</name>
<feature type="chain" id="PRO_0000275178" description="ATP synthase subunit beta, chloroplastic">
    <location>
        <begin position="1"/>
        <end position="498"/>
    </location>
</feature>
<feature type="binding site" evidence="1">
    <location>
        <begin position="172"/>
        <end position="179"/>
    </location>
    <ligand>
        <name>ATP</name>
        <dbReference type="ChEBI" id="CHEBI:30616"/>
    </ligand>
</feature>
<accession>Q09MH1</accession>
<comment type="function">
    <text evidence="1">Produces ATP from ADP in the presence of a proton gradient across the membrane. The catalytic sites are hosted primarily by the beta subunits.</text>
</comment>
<comment type="catalytic activity">
    <reaction evidence="1">
        <text>ATP + H2O + 4 H(+)(in) = ADP + phosphate + 5 H(+)(out)</text>
        <dbReference type="Rhea" id="RHEA:57720"/>
        <dbReference type="ChEBI" id="CHEBI:15377"/>
        <dbReference type="ChEBI" id="CHEBI:15378"/>
        <dbReference type="ChEBI" id="CHEBI:30616"/>
        <dbReference type="ChEBI" id="CHEBI:43474"/>
        <dbReference type="ChEBI" id="CHEBI:456216"/>
        <dbReference type="EC" id="7.1.2.2"/>
    </reaction>
</comment>
<comment type="subunit">
    <text evidence="1">F-type ATPases have 2 components, CF(1) - the catalytic core - and CF(0) - the membrane proton channel. CF(1) has five subunits: alpha(3), beta(3), gamma(1), delta(1), epsilon(1). CF(0) has four main subunits: a(1), b(1), b'(1) and c(9-12).</text>
</comment>
<comment type="subcellular location">
    <subcellularLocation>
        <location evidence="1">Plastid</location>
        <location evidence="1">Chloroplast thylakoid membrane</location>
        <topology evidence="1">Peripheral membrane protein</topology>
    </subcellularLocation>
</comment>
<comment type="similarity">
    <text evidence="1">Belongs to the ATPase alpha/beta chains family.</text>
</comment>
<gene>
    <name evidence="1" type="primary">atpB</name>
</gene>
<evidence type="ECO:0000255" key="1">
    <source>
        <dbReference type="HAMAP-Rule" id="MF_01347"/>
    </source>
</evidence>
<proteinExistence type="inferred from homology"/>
<reference key="1">
    <citation type="journal article" date="2006" name="BMC Plant Biol.">
        <title>The complete chloroplast genome sequence of Citrus sinensis (L.) Osbeck var 'Ridge Pineapple': organization and phylogenetic relationships to other angiosperms.</title>
        <authorList>
            <person name="Bausher M.G."/>
            <person name="Singh N.D."/>
            <person name="Lee S.-B."/>
            <person name="Jansen R.K."/>
            <person name="Daniell H."/>
        </authorList>
    </citation>
    <scope>NUCLEOTIDE SEQUENCE [LARGE SCALE GENOMIC DNA]</scope>
    <source>
        <strain>cv. Osbeck var. Ridge Pineapple</strain>
    </source>
</reference>
<protein>
    <recommendedName>
        <fullName evidence="1">ATP synthase subunit beta, chloroplastic</fullName>
        <ecNumber evidence="1">7.1.2.2</ecNumber>
    </recommendedName>
    <alternativeName>
        <fullName evidence="1">ATP synthase F1 sector subunit beta</fullName>
    </alternativeName>
    <alternativeName>
        <fullName evidence="1">F-ATPase subunit beta</fullName>
    </alternativeName>
</protein>
<sequence>MRINPTTSGPGVSAFANKNLGHIAQIIGPVLDVAFPPGKMPNIYNALVVKGRDTVDQPINVTCEVQQLLGNNRVRAVAMSATDGLTRGMEVIDTGAPLSVPVGGVTLGRIFNVLGEPVDNLGPVDTRTTSPIHKSAPAFIQLDTRLSIFETGIKVVDLLAPYRRGGKIGLFGGAGVGKTVLIMELINNIAKAHGGVSVFGGVGERTREGNDLYMEMKESGVINDQNLSESKVALVYGQMNEPPGARMRVGLTALTMAEYFRDVNEQDVLLFIDNIFRFVQAGSEVSALLGRMPSAVGYQPTLSTEMGSLQERITSTKEGSITSIQAVYVPADDLTDPAPATTFAHLDATTVLSRGLAAKGIYPAVDPLDSTSTMLQPRIVGEEHYETAQRVKQTLQRYKELQDIIAILGLDELSEEDRLTVARARKIERFLSQPFFVAEVFTGSPGKYVGLAETIRGFKLILSGELDGLPEQAFYLVGNIDEVTAKATNLEMESNLKK</sequence>
<organism>
    <name type="scientific">Citrus sinensis</name>
    <name type="common">Sweet orange</name>
    <name type="synonym">Citrus aurantium var. sinensis</name>
    <dbReference type="NCBI Taxonomy" id="2711"/>
    <lineage>
        <taxon>Eukaryota</taxon>
        <taxon>Viridiplantae</taxon>
        <taxon>Streptophyta</taxon>
        <taxon>Embryophyta</taxon>
        <taxon>Tracheophyta</taxon>
        <taxon>Spermatophyta</taxon>
        <taxon>Magnoliopsida</taxon>
        <taxon>eudicotyledons</taxon>
        <taxon>Gunneridae</taxon>
        <taxon>Pentapetalae</taxon>
        <taxon>rosids</taxon>
        <taxon>malvids</taxon>
        <taxon>Sapindales</taxon>
        <taxon>Rutaceae</taxon>
        <taxon>Aurantioideae</taxon>
        <taxon>Citrus</taxon>
    </lineage>
</organism>